<feature type="chain" id="PRO_0000314104" description="PARP-type zinc finger-containing protein C2A9.07c">
    <location>
        <begin position="1"/>
        <end position="246"/>
    </location>
</feature>
<feature type="zinc finger region" description="PARP-type; degenerate" evidence="2">
    <location>
        <begin position="8"/>
        <end position="99"/>
    </location>
</feature>
<feature type="region of interest" description="Disordered" evidence="3">
    <location>
        <begin position="103"/>
        <end position="246"/>
    </location>
</feature>
<feature type="compositionally biased region" description="Basic and acidic residues" evidence="3">
    <location>
        <begin position="103"/>
        <end position="126"/>
    </location>
</feature>
<feature type="compositionally biased region" description="Basic residues" evidence="3">
    <location>
        <begin position="157"/>
        <end position="168"/>
    </location>
</feature>
<feature type="compositionally biased region" description="Acidic residues" evidence="3">
    <location>
        <begin position="175"/>
        <end position="184"/>
    </location>
</feature>
<feature type="compositionally biased region" description="Basic and acidic residues" evidence="3">
    <location>
        <begin position="185"/>
        <end position="196"/>
    </location>
</feature>
<feature type="compositionally biased region" description="Acidic residues" evidence="3">
    <location>
        <begin position="197"/>
        <end position="215"/>
    </location>
</feature>
<feature type="modified residue" description="Phosphothreonine" evidence="1">
    <location>
        <position position="130"/>
    </location>
</feature>
<feature type="modified residue" description="Phosphoserine" evidence="1">
    <location>
        <position position="131"/>
    </location>
</feature>
<feature type="modified residue" description="Phosphoserine" evidence="1">
    <location>
        <position position="243"/>
    </location>
</feature>
<feature type="modified residue" description="Phosphoserine" evidence="1">
    <location>
        <position position="245"/>
    </location>
</feature>
<evidence type="ECO:0000250" key="1"/>
<evidence type="ECO:0000255" key="2">
    <source>
        <dbReference type="PROSITE-ProRule" id="PRU00264"/>
    </source>
</evidence>
<evidence type="ECO:0000256" key="3">
    <source>
        <dbReference type="SAM" id="MobiDB-lite"/>
    </source>
</evidence>
<evidence type="ECO:0000269" key="4">
    <source>
    </source>
</evidence>
<name>YGI7_SCHPO</name>
<accession>Q9Y7K9</accession>
<protein>
    <recommendedName>
        <fullName>PARP-type zinc finger-containing protein C2A9.07c</fullName>
    </recommendedName>
</protein>
<keyword id="KW-0238">DNA-binding</keyword>
<keyword id="KW-0479">Metal-binding</keyword>
<keyword id="KW-0496">Mitochondrion</keyword>
<keyword id="KW-0539">Nucleus</keyword>
<keyword id="KW-0597">Phosphoprotein</keyword>
<keyword id="KW-1185">Reference proteome</keyword>
<keyword id="KW-0862">Zinc</keyword>
<keyword id="KW-0863">Zinc-finger</keyword>
<gene>
    <name type="ORF">SPBC2A9.07c</name>
</gene>
<reference key="1">
    <citation type="journal article" date="2002" name="Nature">
        <title>The genome sequence of Schizosaccharomyces pombe.</title>
        <authorList>
            <person name="Wood V."/>
            <person name="Gwilliam R."/>
            <person name="Rajandream M.A."/>
            <person name="Lyne M.H."/>
            <person name="Lyne R."/>
            <person name="Stewart A."/>
            <person name="Sgouros J.G."/>
            <person name="Peat N."/>
            <person name="Hayles J."/>
            <person name="Baker S.G."/>
            <person name="Basham D."/>
            <person name="Bowman S."/>
            <person name="Brooks K."/>
            <person name="Brown D."/>
            <person name="Brown S."/>
            <person name="Chillingworth T."/>
            <person name="Churcher C.M."/>
            <person name="Collins M."/>
            <person name="Connor R."/>
            <person name="Cronin A."/>
            <person name="Davis P."/>
            <person name="Feltwell T."/>
            <person name="Fraser A."/>
            <person name="Gentles S."/>
            <person name="Goble A."/>
            <person name="Hamlin N."/>
            <person name="Harris D.E."/>
            <person name="Hidalgo J."/>
            <person name="Hodgson G."/>
            <person name="Holroyd S."/>
            <person name="Hornsby T."/>
            <person name="Howarth S."/>
            <person name="Huckle E.J."/>
            <person name="Hunt S."/>
            <person name="Jagels K."/>
            <person name="James K.D."/>
            <person name="Jones L."/>
            <person name="Jones M."/>
            <person name="Leather S."/>
            <person name="McDonald S."/>
            <person name="McLean J."/>
            <person name="Mooney P."/>
            <person name="Moule S."/>
            <person name="Mungall K.L."/>
            <person name="Murphy L.D."/>
            <person name="Niblett D."/>
            <person name="Odell C."/>
            <person name="Oliver K."/>
            <person name="O'Neil S."/>
            <person name="Pearson D."/>
            <person name="Quail M.A."/>
            <person name="Rabbinowitsch E."/>
            <person name="Rutherford K.M."/>
            <person name="Rutter S."/>
            <person name="Saunders D."/>
            <person name="Seeger K."/>
            <person name="Sharp S."/>
            <person name="Skelton J."/>
            <person name="Simmonds M.N."/>
            <person name="Squares R."/>
            <person name="Squares S."/>
            <person name="Stevens K."/>
            <person name="Taylor K."/>
            <person name="Taylor R.G."/>
            <person name="Tivey A."/>
            <person name="Walsh S.V."/>
            <person name="Warren T."/>
            <person name="Whitehead S."/>
            <person name="Woodward J.R."/>
            <person name="Volckaert G."/>
            <person name="Aert R."/>
            <person name="Robben J."/>
            <person name="Grymonprez B."/>
            <person name="Weltjens I."/>
            <person name="Vanstreels E."/>
            <person name="Rieger M."/>
            <person name="Schaefer M."/>
            <person name="Mueller-Auer S."/>
            <person name="Gabel C."/>
            <person name="Fuchs M."/>
            <person name="Duesterhoeft A."/>
            <person name="Fritzc C."/>
            <person name="Holzer E."/>
            <person name="Moestl D."/>
            <person name="Hilbert H."/>
            <person name="Borzym K."/>
            <person name="Langer I."/>
            <person name="Beck A."/>
            <person name="Lehrach H."/>
            <person name="Reinhardt R."/>
            <person name="Pohl T.M."/>
            <person name="Eger P."/>
            <person name="Zimmermann W."/>
            <person name="Wedler H."/>
            <person name="Wambutt R."/>
            <person name="Purnelle B."/>
            <person name="Goffeau A."/>
            <person name="Cadieu E."/>
            <person name="Dreano S."/>
            <person name="Gloux S."/>
            <person name="Lelaure V."/>
            <person name="Mottier S."/>
            <person name="Galibert F."/>
            <person name="Aves S.J."/>
            <person name="Xiang Z."/>
            <person name="Hunt C."/>
            <person name="Moore K."/>
            <person name="Hurst S.M."/>
            <person name="Lucas M."/>
            <person name="Rochet M."/>
            <person name="Gaillardin C."/>
            <person name="Tallada V.A."/>
            <person name="Garzon A."/>
            <person name="Thode G."/>
            <person name="Daga R.R."/>
            <person name="Cruzado L."/>
            <person name="Jimenez J."/>
            <person name="Sanchez M."/>
            <person name="del Rey F."/>
            <person name="Benito J."/>
            <person name="Dominguez A."/>
            <person name="Revuelta J.L."/>
            <person name="Moreno S."/>
            <person name="Armstrong J."/>
            <person name="Forsburg S.L."/>
            <person name="Cerutti L."/>
            <person name="Lowe T."/>
            <person name="McCombie W.R."/>
            <person name="Paulsen I."/>
            <person name="Potashkin J."/>
            <person name="Shpakovski G.V."/>
            <person name="Ussery D."/>
            <person name="Barrell B.G."/>
            <person name="Nurse P."/>
        </authorList>
    </citation>
    <scope>NUCLEOTIDE SEQUENCE [LARGE SCALE GENOMIC DNA]</scope>
    <source>
        <strain>972 / ATCC 24843</strain>
    </source>
</reference>
<reference key="2">
    <citation type="journal article" date="2011" name="Science">
        <title>Comparative functional genomics of the fission yeasts.</title>
        <authorList>
            <person name="Rhind N."/>
            <person name="Chen Z."/>
            <person name="Yassour M."/>
            <person name="Thompson D.A."/>
            <person name="Haas B.J."/>
            <person name="Habib N."/>
            <person name="Wapinski I."/>
            <person name="Roy S."/>
            <person name="Lin M.F."/>
            <person name="Heiman D.I."/>
            <person name="Young S.K."/>
            <person name="Furuya K."/>
            <person name="Guo Y."/>
            <person name="Pidoux A."/>
            <person name="Chen H.M."/>
            <person name="Robbertse B."/>
            <person name="Goldberg J.M."/>
            <person name="Aoki K."/>
            <person name="Bayne E.H."/>
            <person name="Berlin A.M."/>
            <person name="Desjardins C.A."/>
            <person name="Dobbs E."/>
            <person name="Dukaj L."/>
            <person name="Fan L."/>
            <person name="FitzGerald M.G."/>
            <person name="French C."/>
            <person name="Gujja S."/>
            <person name="Hansen K."/>
            <person name="Keifenheim D."/>
            <person name="Levin J.Z."/>
            <person name="Mosher R.A."/>
            <person name="Mueller C.A."/>
            <person name="Pfiffner J."/>
            <person name="Priest M."/>
            <person name="Russ C."/>
            <person name="Smialowska A."/>
            <person name="Swoboda P."/>
            <person name="Sykes S.M."/>
            <person name="Vaughn M."/>
            <person name="Vengrova S."/>
            <person name="Yoder R."/>
            <person name="Zeng Q."/>
            <person name="Allshire R."/>
            <person name="Baulcombe D."/>
            <person name="Birren B.W."/>
            <person name="Brown W."/>
            <person name="Ekwall K."/>
            <person name="Kellis M."/>
            <person name="Leatherwood J."/>
            <person name="Levin H."/>
            <person name="Margalit H."/>
            <person name="Martienssen R."/>
            <person name="Nieduszynski C.A."/>
            <person name="Spatafora J.W."/>
            <person name="Friedman N."/>
            <person name="Dalgaard J.Z."/>
            <person name="Baumann P."/>
            <person name="Niki H."/>
            <person name="Regev A."/>
            <person name="Nusbaum C."/>
        </authorList>
    </citation>
    <scope>REVISION OF GENE MODEL</scope>
</reference>
<reference key="3">
    <citation type="journal article" date="2006" name="Nat. Biotechnol.">
        <title>ORFeome cloning and global analysis of protein localization in the fission yeast Schizosaccharomyces pombe.</title>
        <authorList>
            <person name="Matsuyama A."/>
            <person name="Arai R."/>
            <person name="Yashiroda Y."/>
            <person name="Shirai A."/>
            <person name="Kamata A."/>
            <person name="Sekido S."/>
            <person name="Kobayashi Y."/>
            <person name="Hashimoto A."/>
            <person name="Hamamoto M."/>
            <person name="Hiraoka Y."/>
            <person name="Horinouchi S."/>
            <person name="Yoshida M."/>
        </authorList>
    </citation>
    <scope>SUBCELLULAR LOCATION [LARGE SCALE ANALYSIS]</scope>
</reference>
<reference key="4">
    <citation type="journal article" date="2008" name="J. Proteome Res.">
        <title>Phosphoproteome analysis of fission yeast.</title>
        <authorList>
            <person name="Wilson-Grady J.T."/>
            <person name="Villen J."/>
            <person name="Gygi S.P."/>
        </authorList>
    </citation>
    <scope>PHOSPHORYLATION [LARGE SCALE ANALYSIS] AT THR-130; SER-131; SER-243 AND SER-245</scope>
    <scope>IDENTIFICATION BY MASS SPECTROMETRY</scope>
</reference>
<sequence length="246" mass="28172">MAESGAGYRVELAKTGRAECKGTVCGRSKIGKGDLRFGTFVDVGKFQSWKWRHWGCVTERVLRNVNKKFEGDIKNCLDGFNELNDPIVQEKILRAFEQGHVDEEDEERCRKMASDASEEKDRKIEEGELTSEEEKEPIQDLRKSHKRKSVEKSSVPNKKHKAERKRSPSPKIEILEDDEEIEDVASDKDEEEKPWSGDEEDDDELVVKDSEDETEGVSTIASQRPRRSARRKVDYAESGNEYSDSD</sequence>
<proteinExistence type="evidence at protein level"/>
<dbReference type="EMBL" id="CU329671">
    <property type="protein sequence ID" value="CAB39849.3"/>
    <property type="molecule type" value="Genomic_DNA"/>
</dbReference>
<dbReference type="PIR" id="T40098">
    <property type="entry name" value="T40098"/>
</dbReference>
<dbReference type="SMR" id="Q9Y7K9"/>
<dbReference type="BioGRID" id="276988">
    <property type="interactions" value="8"/>
</dbReference>
<dbReference type="STRING" id="284812.Q9Y7K9"/>
<dbReference type="iPTMnet" id="Q9Y7K9"/>
<dbReference type="PaxDb" id="4896-SPBC2A9.07c.1"/>
<dbReference type="EnsemblFungi" id="SPBC2A9.07c.1">
    <property type="protein sequence ID" value="SPBC2A9.07c.1:pep"/>
    <property type="gene ID" value="SPBC2A9.07c"/>
</dbReference>
<dbReference type="KEGG" id="spo:2540460"/>
<dbReference type="PomBase" id="SPBC2A9.07c"/>
<dbReference type="VEuPathDB" id="FungiDB:SPBC2A9.07c"/>
<dbReference type="eggNOG" id="ENOG502S59M">
    <property type="taxonomic scope" value="Eukaryota"/>
</dbReference>
<dbReference type="HOGENOM" id="CLU_045993_3_1_1"/>
<dbReference type="InParanoid" id="Q9Y7K9"/>
<dbReference type="OMA" id="CKNKECQ"/>
<dbReference type="PRO" id="PR:Q9Y7K9"/>
<dbReference type="Proteomes" id="UP000002485">
    <property type="component" value="Chromosome II"/>
</dbReference>
<dbReference type="GO" id="GO:0005739">
    <property type="term" value="C:mitochondrion"/>
    <property type="evidence" value="ECO:0007005"/>
    <property type="project" value="PomBase"/>
</dbReference>
<dbReference type="GO" id="GO:0005634">
    <property type="term" value="C:nucleus"/>
    <property type="evidence" value="ECO:0000314"/>
    <property type="project" value="PomBase"/>
</dbReference>
<dbReference type="GO" id="GO:0003677">
    <property type="term" value="F:DNA binding"/>
    <property type="evidence" value="ECO:0000255"/>
    <property type="project" value="PomBase"/>
</dbReference>
<dbReference type="GO" id="GO:0008270">
    <property type="term" value="F:zinc ion binding"/>
    <property type="evidence" value="ECO:0007669"/>
    <property type="project" value="UniProtKB-KW"/>
</dbReference>
<dbReference type="Gene3D" id="3.30.1740.10">
    <property type="entry name" value="Zinc finger, PARP-type"/>
    <property type="match status" value="1"/>
</dbReference>
<dbReference type="InterPro" id="IPR001510">
    <property type="entry name" value="Znf_PARP"/>
</dbReference>
<dbReference type="InterPro" id="IPR036957">
    <property type="entry name" value="Znf_PARP_sf"/>
</dbReference>
<dbReference type="Pfam" id="PF00645">
    <property type="entry name" value="zf-PARP"/>
    <property type="match status" value="1"/>
</dbReference>
<dbReference type="SMART" id="SM01336">
    <property type="entry name" value="zf-PARP"/>
    <property type="match status" value="1"/>
</dbReference>
<dbReference type="SUPFAM" id="SSF57716">
    <property type="entry name" value="Glucocorticoid receptor-like (DNA-binding domain)"/>
    <property type="match status" value="1"/>
</dbReference>
<dbReference type="PROSITE" id="PS50064">
    <property type="entry name" value="ZF_PARP_2"/>
    <property type="match status" value="1"/>
</dbReference>
<comment type="subcellular location">
    <subcellularLocation>
        <location evidence="2 4">Nucleus</location>
    </subcellularLocation>
    <subcellularLocation>
        <location evidence="4">Mitochondrion</location>
    </subcellularLocation>
</comment>
<organism>
    <name type="scientific">Schizosaccharomyces pombe (strain 972 / ATCC 24843)</name>
    <name type="common">Fission yeast</name>
    <dbReference type="NCBI Taxonomy" id="284812"/>
    <lineage>
        <taxon>Eukaryota</taxon>
        <taxon>Fungi</taxon>
        <taxon>Dikarya</taxon>
        <taxon>Ascomycota</taxon>
        <taxon>Taphrinomycotina</taxon>
        <taxon>Schizosaccharomycetes</taxon>
        <taxon>Schizosaccharomycetales</taxon>
        <taxon>Schizosaccharomycetaceae</taxon>
        <taxon>Schizosaccharomyces</taxon>
    </lineage>
</organism>